<feature type="chain" id="PRO_0000155135" description="Protein SEY1">
    <location>
        <begin position="1"/>
        <end position="848"/>
    </location>
</feature>
<feature type="topological domain" description="Cytoplasmic" evidence="1">
    <location>
        <begin position="1"/>
        <end position="733"/>
    </location>
</feature>
<feature type="transmembrane region" description="Helical" evidence="1">
    <location>
        <begin position="734"/>
        <end position="754"/>
    </location>
</feature>
<feature type="topological domain" description="Lumenal" evidence="1">
    <location>
        <begin position="755"/>
        <end position="757"/>
    </location>
</feature>
<feature type="transmembrane region" description="Helical" evidence="1">
    <location>
        <begin position="758"/>
        <end position="778"/>
    </location>
</feature>
<feature type="topological domain" description="Cytoplasmic" evidence="1">
    <location>
        <begin position="779"/>
        <end position="848"/>
    </location>
</feature>
<feature type="domain" description="GB1/RHD3-type G" evidence="2">
    <location>
        <begin position="47"/>
        <end position="277"/>
    </location>
</feature>
<feature type="region of interest" description="Disordered" evidence="3">
    <location>
        <begin position="815"/>
        <end position="848"/>
    </location>
</feature>
<feature type="compositionally biased region" description="Basic and acidic residues" evidence="3">
    <location>
        <begin position="829"/>
        <end position="848"/>
    </location>
</feature>
<feature type="binding site" evidence="1">
    <location>
        <begin position="57"/>
        <end position="64"/>
    </location>
    <ligand>
        <name>GTP</name>
        <dbReference type="ChEBI" id="CHEBI:37565"/>
    </ligand>
</feature>
<keyword id="KW-0256">Endoplasmic reticulum</keyword>
<keyword id="KW-0342">GTP-binding</keyword>
<keyword id="KW-0378">Hydrolase</keyword>
<keyword id="KW-0472">Membrane</keyword>
<keyword id="KW-0547">Nucleotide-binding</keyword>
<keyword id="KW-1185">Reference proteome</keyword>
<keyword id="KW-0812">Transmembrane</keyword>
<keyword id="KW-1133">Transmembrane helix</keyword>
<gene>
    <name evidence="1" type="primary">SEY1</name>
    <name type="ORF">MGG_06979</name>
</gene>
<name>SEY1_PYRO7</name>
<proteinExistence type="inferred from homology"/>
<sequence length="848" mass="95441">MNGNFAAVGSEPTDAQFEHGIQVIDEDKQYNGLVNDYLRRTHVAEAGFNYHLISVFGSQSTGKSTLLNNLFGTEFSVMSESERRQTTKGIWMSKNKREGKMAENILVMDVEGTDGRERGEDQDFERKSALFALATSEVLIVNIWEHQVGLYQGANMGLLKTVFEVNLQLFLKDKQSSPRSLLFFVIRDHIGNTPLSNLRNTLVQDLTKIWSSISKPPALENAKIEDYFDFAFAALPHKILQPEKFVTEVENLGTRFVAGHRSTQDQEFVGGVFLPEYHRRIPADGFSIYAEGIWDQIVNNKDLDLPTQQELLAQFRCDEISRDVLNAFDEAITPLEDKQAEASRLGKPFVLPDLGDTARSARSKAVEAFKVQASRYHKGVYTRKQAELEGKMDSRLKALYQGQLAAAHKAGVAAFSDAVTGAVKAGQKSGGSYEFAEIVDKQKRKTLDIFAKEAQGLEIEGLAWTNFKPQFLLFEKELDEVSARLRKDEMRRLATRVERWVKSRLGDSIGLEFNKLGSGRGGSGAPETGEKPATEKDLWDRIWTVFVAVVKEAQERFAERAKSFEASSEEVEIGLWRLRRKSWVALRERIDEEVMEGNILLKLRENFEDKFRYDEAGVPRIWRPTDDIEGIYTRARESTLTLIPLLSRFRLAETYASPDLPGWIGNQPPGVEPDDEEDLTPIGGIDEEEGKSLEEEMTVLSESKRQDLVVRFKKTADGVYVEAKRGALGGMTQVPLYFWIALFAFGWNEIWMVIRNPFLFILLLLSAGGTYVAYNLSLLGPMMQMTNAAANQASEIGKQKLREFLENNETARQALAMPASSKSSGGEQVRMDTLDSKGKKKDYDDDGI</sequence>
<accession>Q525S7</accession>
<accession>A4R1C1</accession>
<accession>G4MNV9</accession>
<reference key="1">
    <citation type="journal article" date="2005" name="Nature">
        <title>The genome sequence of the rice blast fungus Magnaporthe grisea.</title>
        <authorList>
            <person name="Dean R.A."/>
            <person name="Talbot N.J."/>
            <person name="Ebbole D.J."/>
            <person name="Farman M.L."/>
            <person name="Mitchell T.K."/>
            <person name="Orbach M.J."/>
            <person name="Thon M.R."/>
            <person name="Kulkarni R."/>
            <person name="Xu J.-R."/>
            <person name="Pan H."/>
            <person name="Read N.D."/>
            <person name="Lee Y.-H."/>
            <person name="Carbone I."/>
            <person name="Brown D."/>
            <person name="Oh Y.Y."/>
            <person name="Donofrio N."/>
            <person name="Jeong J.S."/>
            <person name="Soanes D.M."/>
            <person name="Djonovic S."/>
            <person name="Kolomiets E."/>
            <person name="Rehmeyer C."/>
            <person name="Li W."/>
            <person name="Harding M."/>
            <person name="Kim S."/>
            <person name="Lebrun M.-H."/>
            <person name="Bohnert H."/>
            <person name="Coughlan S."/>
            <person name="Butler J."/>
            <person name="Calvo S.E."/>
            <person name="Ma L.-J."/>
            <person name="Nicol R."/>
            <person name="Purcell S."/>
            <person name="Nusbaum C."/>
            <person name="Galagan J.E."/>
            <person name="Birren B.W."/>
        </authorList>
    </citation>
    <scope>NUCLEOTIDE SEQUENCE [LARGE SCALE GENOMIC DNA]</scope>
    <source>
        <strain>70-15 / ATCC MYA-4617 / FGSC 8958</strain>
    </source>
</reference>
<evidence type="ECO:0000255" key="1">
    <source>
        <dbReference type="HAMAP-Rule" id="MF_03109"/>
    </source>
</evidence>
<evidence type="ECO:0000255" key="2">
    <source>
        <dbReference type="PROSITE-ProRule" id="PRU01052"/>
    </source>
</evidence>
<evidence type="ECO:0000256" key="3">
    <source>
        <dbReference type="SAM" id="MobiDB-lite"/>
    </source>
</evidence>
<comment type="function">
    <text evidence="1">Cooperates with the reticulon proteins and tubule-shaping DP1 family proteins to generate and maintain the structure of the tubular endoplasmic reticulum network. Has GTPase activity, which is required for its function in ER organization.</text>
</comment>
<comment type="subcellular location">
    <subcellularLocation>
        <location evidence="1">Endoplasmic reticulum membrane</location>
        <topology evidence="1">Multi-pass membrane protein</topology>
    </subcellularLocation>
    <text evidence="1">Enriched in the cortical ER. Concentrated in punctae along the ER tubules.</text>
</comment>
<comment type="similarity">
    <text evidence="2">Belongs to the TRAFAC class dynamin-like GTPase superfamily. GB1/RHD3 GTPase family. RHD3 subfamily.</text>
</comment>
<dbReference type="EC" id="3.6.5.-" evidence="1"/>
<dbReference type="EMBL" id="CM001231">
    <property type="protein sequence ID" value="EHA57116.1"/>
    <property type="molecule type" value="Genomic_DNA"/>
</dbReference>
<dbReference type="RefSeq" id="XP_003709728.1">
    <property type="nucleotide sequence ID" value="XM_003709680.1"/>
</dbReference>
<dbReference type="SMR" id="Q525S7"/>
<dbReference type="FunCoup" id="Q525S7">
    <property type="interactions" value="68"/>
</dbReference>
<dbReference type="STRING" id="242507.Q525S7"/>
<dbReference type="EnsemblFungi" id="MGG_06979T0">
    <property type="protein sequence ID" value="MGG_06979T0"/>
    <property type="gene ID" value="MGG_06979"/>
</dbReference>
<dbReference type="GeneID" id="2685152"/>
<dbReference type="KEGG" id="mgr:MGG_06979"/>
<dbReference type="VEuPathDB" id="FungiDB:MGG_06979"/>
<dbReference type="eggNOG" id="KOG2203">
    <property type="taxonomic scope" value="Eukaryota"/>
</dbReference>
<dbReference type="HOGENOM" id="CLU_011270_0_0_1"/>
<dbReference type="InParanoid" id="Q525S7"/>
<dbReference type="OMA" id="PIIKMTE"/>
<dbReference type="OrthoDB" id="1597724at2759"/>
<dbReference type="Proteomes" id="UP000009058">
    <property type="component" value="Chromosome 1"/>
</dbReference>
<dbReference type="GO" id="GO:0005789">
    <property type="term" value="C:endoplasmic reticulum membrane"/>
    <property type="evidence" value="ECO:0007669"/>
    <property type="project" value="UniProtKB-SubCell"/>
</dbReference>
<dbReference type="GO" id="GO:0005525">
    <property type="term" value="F:GTP binding"/>
    <property type="evidence" value="ECO:0007669"/>
    <property type="project" value="UniProtKB-UniRule"/>
</dbReference>
<dbReference type="GO" id="GO:0003924">
    <property type="term" value="F:GTPase activity"/>
    <property type="evidence" value="ECO:0007669"/>
    <property type="project" value="UniProtKB-UniRule"/>
</dbReference>
<dbReference type="GO" id="GO:0016320">
    <property type="term" value="P:endoplasmic reticulum membrane fusion"/>
    <property type="evidence" value="ECO:0007669"/>
    <property type="project" value="TreeGrafter"/>
</dbReference>
<dbReference type="CDD" id="cd01851">
    <property type="entry name" value="GBP"/>
    <property type="match status" value="1"/>
</dbReference>
<dbReference type="FunFam" id="3.40.50.300:FF:000727">
    <property type="entry name" value="Protein SEY1 homolog"/>
    <property type="match status" value="1"/>
</dbReference>
<dbReference type="Gene3D" id="3.40.50.300">
    <property type="entry name" value="P-loop containing nucleotide triphosphate hydrolases"/>
    <property type="match status" value="1"/>
</dbReference>
<dbReference type="HAMAP" id="MF_03109">
    <property type="entry name" value="Sey1"/>
    <property type="match status" value="1"/>
</dbReference>
<dbReference type="InterPro" id="IPR030386">
    <property type="entry name" value="G_GB1_RHD3_dom"/>
</dbReference>
<dbReference type="InterPro" id="IPR027417">
    <property type="entry name" value="P-loop_NTPase"/>
</dbReference>
<dbReference type="InterPro" id="IPR008803">
    <property type="entry name" value="RHD3/Sey1"/>
</dbReference>
<dbReference type="InterPro" id="IPR046758">
    <property type="entry name" value="Sey1/RHD3-like_3HB"/>
</dbReference>
<dbReference type="PANTHER" id="PTHR45923">
    <property type="entry name" value="PROTEIN SEY1"/>
    <property type="match status" value="1"/>
</dbReference>
<dbReference type="PANTHER" id="PTHR45923:SF2">
    <property type="entry name" value="PROTEIN SEY1"/>
    <property type="match status" value="1"/>
</dbReference>
<dbReference type="Pfam" id="PF05879">
    <property type="entry name" value="RHD3_GTPase"/>
    <property type="match status" value="1"/>
</dbReference>
<dbReference type="Pfam" id="PF20428">
    <property type="entry name" value="Sey1_3HB"/>
    <property type="match status" value="1"/>
</dbReference>
<dbReference type="SUPFAM" id="SSF52540">
    <property type="entry name" value="P-loop containing nucleoside triphosphate hydrolases"/>
    <property type="match status" value="1"/>
</dbReference>
<dbReference type="PROSITE" id="PS51715">
    <property type="entry name" value="G_GB1_RHD3"/>
    <property type="match status" value="1"/>
</dbReference>
<protein>
    <recommendedName>
        <fullName evidence="1">Protein SEY1</fullName>
        <ecNumber evidence="1">3.6.5.-</ecNumber>
    </recommendedName>
</protein>
<organism>
    <name type="scientific">Pyricularia oryzae (strain 70-15 / ATCC MYA-4617 / FGSC 8958)</name>
    <name type="common">Rice blast fungus</name>
    <name type="synonym">Magnaporthe oryzae</name>
    <dbReference type="NCBI Taxonomy" id="242507"/>
    <lineage>
        <taxon>Eukaryota</taxon>
        <taxon>Fungi</taxon>
        <taxon>Dikarya</taxon>
        <taxon>Ascomycota</taxon>
        <taxon>Pezizomycotina</taxon>
        <taxon>Sordariomycetes</taxon>
        <taxon>Sordariomycetidae</taxon>
        <taxon>Magnaporthales</taxon>
        <taxon>Pyriculariaceae</taxon>
        <taxon>Pyricularia</taxon>
    </lineage>
</organism>